<feature type="chain" id="PRO_0000328171" description="Paxillin-B">
    <location>
        <begin position="1"/>
        <end position="569"/>
    </location>
</feature>
<feature type="domain" description="LIM zinc-binding 1" evidence="1">
    <location>
        <begin position="334"/>
        <end position="391"/>
    </location>
</feature>
<feature type="domain" description="LIM zinc-binding 2" evidence="1">
    <location>
        <begin position="393"/>
        <end position="452"/>
    </location>
</feature>
<feature type="domain" description="LIM zinc-binding 3" evidence="1">
    <location>
        <begin position="453"/>
        <end position="510"/>
    </location>
</feature>
<feature type="domain" description="LIM zinc-binding 4" evidence="1">
    <location>
        <begin position="511"/>
        <end position="569"/>
    </location>
</feature>
<feature type="region of interest" description="Disordered" evidence="2">
    <location>
        <begin position="62"/>
        <end position="103"/>
    </location>
</feature>
<feature type="region of interest" description="Disordered" evidence="2">
    <location>
        <begin position="129"/>
        <end position="311"/>
    </location>
</feature>
<feature type="short sequence motif" description="LD motif 1">
    <location>
        <begin position="10"/>
        <end position="18"/>
    </location>
</feature>
<feature type="short sequence motif" description="LD motif 2">
    <location>
        <begin position="106"/>
        <end position="112"/>
    </location>
</feature>
<feature type="short sequence motif" description="LD motif 3">
    <location>
        <begin position="232"/>
        <end position="239"/>
    </location>
</feature>
<feature type="short sequence motif" description="LD motif 4">
    <location>
        <begin position="311"/>
        <end position="318"/>
    </location>
</feature>
<feature type="compositionally biased region" description="Polar residues" evidence="2">
    <location>
        <begin position="62"/>
        <end position="78"/>
    </location>
</feature>
<feature type="compositionally biased region" description="Low complexity" evidence="2">
    <location>
        <begin position="79"/>
        <end position="102"/>
    </location>
</feature>
<feature type="compositionally biased region" description="Low complexity" evidence="2">
    <location>
        <begin position="150"/>
        <end position="161"/>
    </location>
</feature>
<feature type="compositionally biased region" description="Polar residues" evidence="2">
    <location>
        <begin position="162"/>
        <end position="188"/>
    </location>
</feature>
<feature type="compositionally biased region" description="Polar residues" evidence="2">
    <location>
        <begin position="196"/>
        <end position="206"/>
    </location>
</feature>
<feature type="compositionally biased region" description="Low complexity" evidence="2">
    <location>
        <begin position="207"/>
        <end position="217"/>
    </location>
</feature>
<feature type="compositionally biased region" description="Basic residues" evidence="2">
    <location>
        <begin position="258"/>
        <end position="272"/>
    </location>
</feature>
<feature type="compositionally biased region" description="Low complexity" evidence="2">
    <location>
        <begin position="273"/>
        <end position="301"/>
    </location>
</feature>
<feature type="sequence conflict" description="In Ref. 1; CAA05356." evidence="4" ref="1">
    <original>G</original>
    <variation>R</variation>
    <location>
        <position position="40"/>
    </location>
</feature>
<feature type="sequence conflict" description="In Ref. 1; CAA05356." evidence="4" ref="1">
    <location>
        <position position="42"/>
    </location>
</feature>
<feature type="sequence conflict" description="In Ref. 1; CAA05356." evidence="4" ref="1">
    <original>A</original>
    <variation>T</variation>
    <location>
        <position position="540"/>
    </location>
</feature>
<sequence>MATKGLNMDDLDLLLADLGRPKSSIKVTATVQTTATPSSGKNFDNSDIQNEIQSIIEELDQQPQTVQTISTPAPKNHNTTTTTASFSVSSQPAPQPPQQSQQIDGLDDLDELMESLNTSISTALKAVPTTPEEHITHANSNSPPPSLHKNTSSTNSASSLSRPNNNPSVVSTPQPGKVTSTATITTKKQPALSKATLETTSGNNVYSSQPSQSQPQPYKVTATNSQPSSDDLDELLKGLSPSTTTTTTVPPPVQRDQHQHHHQHQHHHHHNPNHNQTQTVTTQINIGRTNTPNNNNNNNTNSPKVVHGDDLDNLLNNLTSQVKDIDSTGPTSRGTCGGCRKPIFGETIQAMGKFYHPEHFCCHNCQNPLGTKNYYEQESLPHCEKCYQELFCARCAHCDEPISDRCITALGKKWHVHHFVCTQCLKPFEGGNFFERDGRPYCEADFYSTFAVRCGGCNSPIRGECINALGTQWHPEHFVCQYCQKSFTNGQFFEFGGKPYCDVHYHQQAGSVCSGCGKAVSGRCVDALDKKWHPEHFVCAFCMNPLAGGSYTANNGKPYCKGCHNKLFA</sequence>
<organism>
    <name type="scientific">Dictyostelium discoideum</name>
    <name type="common">Social amoeba</name>
    <dbReference type="NCBI Taxonomy" id="44689"/>
    <lineage>
        <taxon>Eukaryota</taxon>
        <taxon>Amoebozoa</taxon>
        <taxon>Evosea</taxon>
        <taxon>Eumycetozoa</taxon>
        <taxon>Dictyostelia</taxon>
        <taxon>Dictyosteliales</taxon>
        <taxon>Dictyosteliaceae</taxon>
        <taxon>Dictyostelium</taxon>
    </lineage>
</organism>
<name>PAXB_DICDI</name>
<protein>
    <recommendedName>
        <fullName>Paxillin-B</fullName>
    </recommendedName>
</protein>
<dbReference type="EMBL" id="AJ002382">
    <property type="protein sequence ID" value="CAA05356.1"/>
    <property type="status" value="ALT_FRAME"/>
    <property type="molecule type" value="mRNA"/>
</dbReference>
<dbReference type="EMBL" id="AC123513">
    <property type="protein sequence ID" value="AAM44368.1"/>
    <property type="molecule type" value="Genomic_DNA"/>
</dbReference>
<dbReference type="EMBL" id="AAFI02000012">
    <property type="protein sequence ID" value="EAL69947.1"/>
    <property type="molecule type" value="Genomic_DNA"/>
</dbReference>
<dbReference type="RefSeq" id="XP_644036.1">
    <property type="nucleotide sequence ID" value="XM_638944.1"/>
</dbReference>
<dbReference type="SMR" id="Q8MML5"/>
<dbReference type="FunCoup" id="Q8MML5">
    <property type="interactions" value="376"/>
</dbReference>
<dbReference type="STRING" id="44689.Q8MML5"/>
<dbReference type="PaxDb" id="44689-DDB0185208"/>
<dbReference type="EnsemblProtists" id="EAL69947">
    <property type="protein sequence ID" value="EAL69947"/>
    <property type="gene ID" value="DDB_G0274109"/>
</dbReference>
<dbReference type="GeneID" id="8619466"/>
<dbReference type="KEGG" id="ddi:DDB_G0274109"/>
<dbReference type="dictyBase" id="DDB_G0274109">
    <property type="gene designation" value="paxB"/>
</dbReference>
<dbReference type="VEuPathDB" id="AmoebaDB:DDB_G0274109"/>
<dbReference type="eggNOG" id="KOG1703">
    <property type="taxonomic scope" value="Eukaryota"/>
</dbReference>
<dbReference type="HOGENOM" id="CLU_001357_1_2_1"/>
<dbReference type="InParanoid" id="Q8MML5"/>
<dbReference type="OMA" id="FVCAFCM"/>
<dbReference type="PRO" id="PR:Q8MML5"/>
<dbReference type="Proteomes" id="UP000002195">
    <property type="component" value="Chromosome 2"/>
</dbReference>
<dbReference type="GO" id="GO:0005938">
    <property type="term" value="C:cell cortex"/>
    <property type="evidence" value="ECO:0007669"/>
    <property type="project" value="UniProtKB-SubCell"/>
</dbReference>
<dbReference type="GO" id="GO:0031941">
    <property type="term" value="C:filamentous actin"/>
    <property type="evidence" value="ECO:0000314"/>
    <property type="project" value="dictyBase"/>
</dbReference>
<dbReference type="GO" id="GO:0030175">
    <property type="term" value="C:filopodium"/>
    <property type="evidence" value="ECO:0000314"/>
    <property type="project" value="dictyBase"/>
</dbReference>
<dbReference type="GO" id="GO:0032433">
    <property type="term" value="C:filopodium tip"/>
    <property type="evidence" value="ECO:0000314"/>
    <property type="project" value="dictyBase"/>
</dbReference>
<dbReference type="GO" id="GO:0005925">
    <property type="term" value="C:focal adhesion"/>
    <property type="evidence" value="ECO:0000314"/>
    <property type="project" value="dictyBase"/>
</dbReference>
<dbReference type="GO" id="GO:0032991">
    <property type="term" value="C:protein-containing complex"/>
    <property type="evidence" value="ECO:0000314"/>
    <property type="project" value="dictyBase"/>
</dbReference>
<dbReference type="GO" id="GO:0046872">
    <property type="term" value="F:metal ion binding"/>
    <property type="evidence" value="ECO:0007669"/>
    <property type="project" value="UniProtKB-KW"/>
</dbReference>
<dbReference type="GO" id="GO:0016339">
    <property type="term" value="P:calcium-dependent cell-cell adhesion via plasma membrane cell adhesion molecules"/>
    <property type="evidence" value="ECO:0000315"/>
    <property type="project" value="dictyBase"/>
</dbReference>
<dbReference type="GO" id="GO:0016477">
    <property type="term" value="P:cell migration"/>
    <property type="evidence" value="ECO:0000315"/>
    <property type="project" value="dictyBase"/>
</dbReference>
<dbReference type="GO" id="GO:0048870">
    <property type="term" value="P:cell motility"/>
    <property type="evidence" value="ECO:0000315"/>
    <property type="project" value="dictyBase"/>
</dbReference>
<dbReference type="GO" id="GO:0031589">
    <property type="term" value="P:cell-substrate adhesion"/>
    <property type="evidence" value="ECO:0000315"/>
    <property type="project" value="dictyBase"/>
</dbReference>
<dbReference type="GO" id="GO:0043327">
    <property type="term" value="P:chemotaxis to cAMP"/>
    <property type="evidence" value="ECO:0000315"/>
    <property type="project" value="dictyBase"/>
</dbReference>
<dbReference type="GO" id="GO:0043326">
    <property type="term" value="P:chemotaxis to folate"/>
    <property type="evidence" value="ECO:0000315"/>
    <property type="project" value="dictyBase"/>
</dbReference>
<dbReference type="GO" id="GO:0031154">
    <property type="term" value="P:culmination involved in sorocarp development"/>
    <property type="evidence" value="ECO:0000315"/>
    <property type="project" value="dictyBase"/>
</dbReference>
<dbReference type="GO" id="GO:0006897">
    <property type="term" value="P:endocytosis"/>
    <property type="evidence" value="ECO:0000315"/>
    <property type="project" value="dictyBase"/>
</dbReference>
<dbReference type="GO" id="GO:0061952">
    <property type="term" value="P:midbody abscission"/>
    <property type="evidence" value="ECO:0000315"/>
    <property type="project" value="dictyBase"/>
</dbReference>
<dbReference type="GO" id="GO:0000281">
    <property type="term" value="P:mitotic cytokinesis"/>
    <property type="evidence" value="ECO:0000316"/>
    <property type="project" value="dictyBase"/>
</dbReference>
<dbReference type="GO" id="GO:0050765">
    <property type="term" value="P:negative regulation of phagocytosis"/>
    <property type="evidence" value="ECO:0000315"/>
    <property type="project" value="dictyBase"/>
</dbReference>
<dbReference type="GO" id="GO:0045921">
    <property type="term" value="P:positive regulation of exocytosis"/>
    <property type="evidence" value="ECO:0000315"/>
    <property type="project" value="dictyBase"/>
</dbReference>
<dbReference type="GO" id="GO:0032956">
    <property type="term" value="P:regulation of actin cytoskeleton organization"/>
    <property type="evidence" value="ECO:0000315"/>
    <property type="project" value="dictyBase"/>
</dbReference>
<dbReference type="GO" id="GO:0031153">
    <property type="term" value="P:slug development involved in sorocarp development"/>
    <property type="evidence" value="ECO:0000315"/>
    <property type="project" value="dictyBase"/>
</dbReference>
<dbReference type="GO" id="GO:0044671">
    <property type="term" value="P:sorocarp spore cell differentiation"/>
    <property type="evidence" value="ECO:0000314"/>
    <property type="project" value="dictyBase"/>
</dbReference>
<dbReference type="CDD" id="cd09338">
    <property type="entry name" value="LIM3_Paxillin_like"/>
    <property type="match status" value="1"/>
</dbReference>
<dbReference type="CDD" id="cd09334">
    <property type="entry name" value="LIM4_PINCH"/>
    <property type="match status" value="1"/>
</dbReference>
<dbReference type="FunFam" id="2.10.110.10:FF:000008">
    <property type="entry name" value="Paxillin isoform 1"/>
    <property type="match status" value="1"/>
</dbReference>
<dbReference type="FunFam" id="2.10.110.10:FF:000009">
    <property type="entry name" value="Paxillin isoform 1"/>
    <property type="match status" value="3"/>
</dbReference>
<dbReference type="Gene3D" id="2.10.110.10">
    <property type="entry name" value="Cysteine Rich Protein"/>
    <property type="match status" value="4"/>
</dbReference>
<dbReference type="InterPro" id="IPR050604">
    <property type="entry name" value="PDZ-LIM_domain"/>
</dbReference>
<dbReference type="InterPro" id="IPR001781">
    <property type="entry name" value="Znf_LIM"/>
</dbReference>
<dbReference type="PANTHER" id="PTHR24214:SF62">
    <property type="entry name" value="LEUPAXIN"/>
    <property type="match status" value="1"/>
</dbReference>
<dbReference type="PANTHER" id="PTHR24214">
    <property type="entry name" value="PDZ AND LIM DOMAIN PROTEIN ZASP"/>
    <property type="match status" value="1"/>
</dbReference>
<dbReference type="Pfam" id="PF00412">
    <property type="entry name" value="LIM"/>
    <property type="match status" value="4"/>
</dbReference>
<dbReference type="SMART" id="SM00132">
    <property type="entry name" value="LIM"/>
    <property type="match status" value="4"/>
</dbReference>
<dbReference type="SUPFAM" id="SSF57716">
    <property type="entry name" value="Glucocorticoid receptor-like (DNA-binding domain)"/>
    <property type="match status" value="5"/>
</dbReference>
<dbReference type="PROSITE" id="PS00478">
    <property type="entry name" value="LIM_DOMAIN_1"/>
    <property type="match status" value="4"/>
</dbReference>
<dbReference type="PROSITE" id="PS50023">
    <property type="entry name" value="LIM_DOMAIN_2"/>
    <property type="match status" value="4"/>
</dbReference>
<evidence type="ECO:0000255" key="1">
    <source>
        <dbReference type="PROSITE-ProRule" id="PRU00125"/>
    </source>
</evidence>
<evidence type="ECO:0000256" key="2">
    <source>
        <dbReference type="SAM" id="MobiDB-lite"/>
    </source>
</evidence>
<evidence type="ECO:0000269" key="3">
    <source>
    </source>
</evidence>
<evidence type="ECO:0000305" key="4"/>
<keyword id="KW-0130">Cell adhesion</keyword>
<keyword id="KW-0965">Cell junction</keyword>
<keyword id="KW-0966">Cell projection</keyword>
<keyword id="KW-0963">Cytoplasm</keyword>
<keyword id="KW-0206">Cytoskeleton</keyword>
<keyword id="KW-0440">LIM domain</keyword>
<keyword id="KW-0479">Metal-binding</keyword>
<keyword id="KW-1185">Reference proteome</keyword>
<keyword id="KW-0677">Repeat</keyword>
<keyword id="KW-0862">Zinc</keyword>
<reference key="1">
    <citation type="journal article" date="2005" name="J. Cell Sci.">
        <title>Paxillin is required for cell-substrate adhesion, cell sorting and slug migration during Dictyostelium development.</title>
        <authorList>
            <person name="Bukharova T."/>
            <person name="Weijer G."/>
            <person name="Bosgraaf L."/>
            <person name="Dormann D."/>
            <person name="van Haastert P.J."/>
            <person name="Weijer C.J."/>
        </authorList>
    </citation>
    <scope>NUCLEOTIDE SEQUENCE [MRNA]</scope>
    <scope>FUNCTION</scope>
    <scope>SUBCELLULAR LOCATION</scope>
    <scope>TISSUE SPECIFICITY</scope>
    <scope>DEVELOPMENTAL STAGE</scope>
    <scope>DISRUPTION PHENOTYPE</scope>
    <source>
        <strain>AX3-1</strain>
    </source>
</reference>
<reference key="2">
    <citation type="journal article" date="2002" name="Nature">
        <title>Sequence and analysis of chromosome 2 of Dictyostelium discoideum.</title>
        <authorList>
            <person name="Gloeckner G."/>
            <person name="Eichinger L."/>
            <person name="Szafranski K."/>
            <person name="Pachebat J.A."/>
            <person name="Bankier A.T."/>
            <person name="Dear P.H."/>
            <person name="Lehmann R."/>
            <person name="Baumgart C."/>
            <person name="Parra G."/>
            <person name="Abril J.F."/>
            <person name="Guigo R."/>
            <person name="Kumpf K."/>
            <person name="Tunggal B."/>
            <person name="Cox E.C."/>
            <person name="Quail M.A."/>
            <person name="Platzer M."/>
            <person name="Rosenthal A."/>
            <person name="Noegel A.A."/>
        </authorList>
    </citation>
    <scope>NUCLEOTIDE SEQUENCE [LARGE SCALE GENOMIC DNA]</scope>
    <source>
        <strain>AX4</strain>
    </source>
</reference>
<reference key="3">
    <citation type="journal article" date="2005" name="Nature">
        <title>The genome of the social amoeba Dictyostelium discoideum.</title>
        <authorList>
            <person name="Eichinger L."/>
            <person name="Pachebat J.A."/>
            <person name="Gloeckner G."/>
            <person name="Rajandream M.A."/>
            <person name="Sucgang R."/>
            <person name="Berriman M."/>
            <person name="Song J."/>
            <person name="Olsen R."/>
            <person name="Szafranski K."/>
            <person name="Xu Q."/>
            <person name="Tunggal B."/>
            <person name="Kummerfeld S."/>
            <person name="Madera M."/>
            <person name="Konfortov B.A."/>
            <person name="Rivero F."/>
            <person name="Bankier A.T."/>
            <person name="Lehmann R."/>
            <person name="Hamlin N."/>
            <person name="Davies R."/>
            <person name="Gaudet P."/>
            <person name="Fey P."/>
            <person name="Pilcher K."/>
            <person name="Chen G."/>
            <person name="Saunders D."/>
            <person name="Sodergren E.J."/>
            <person name="Davis P."/>
            <person name="Kerhornou A."/>
            <person name="Nie X."/>
            <person name="Hall N."/>
            <person name="Anjard C."/>
            <person name="Hemphill L."/>
            <person name="Bason N."/>
            <person name="Farbrother P."/>
            <person name="Desany B."/>
            <person name="Just E."/>
            <person name="Morio T."/>
            <person name="Rost R."/>
            <person name="Churcher C.M."/>
            <person name="Cooper J."/>
            <person name="Haydock S."/>
            <person name="van Driessche N."/>
            <person name="Cronin A."/>
            <person name="Goodhead I."/>
            <person name="Muzny D.M."/>
            <person name="Mourier T."/>
            <person name="Pain A."/>
            <person name="Lu M."/>
            <person name="Harper D."/>
            <person name="Lindsay R."/>
            <person name="Hauser H."/>
            <person name="James K.D."/>
            <person name="Quiles M."/>
            <person name="Madan Babu M."/>
            <person name="Saito T."/>
            <person name="Buchrieser C."/>
            <person name="Wardroper A."/>
            <person name="Felder M."/>
            <person name="Thangavelu M."/>
            <person name="Johnson D."/>
            <person name="Knights A."/>
            <person name="Loulseged H."/>
            <person name="Mungall K.L."/>
            <person name="Oliver K."/>
            <person name="Price C."/>
            <person name="Quail M.A."/>
            <person name="Urushihara H."/>
            <person name="Hernandez J."/>
            <person name="Rabbinowitsch E."/>
            <person name="Steffen D."/>
            <person name="Sanders M."/>
            <person name="Ma J."/>
            <person name="Kohara Y."/>
            <person name="Sharp S."/>
            <person name="Simmonds M.N."/>
            <person name="Spiegler S."/>
            <person name="Tivey A."/>
            <person name="Sugano S."/>
            <person name="White B."/>
            <person name="Walker D."/>
            <person name="Woodward J.R."/>
            <person name="Winckler T."/>
            <person name="Tanaka Y."/>
            <person name="Shaulsky G."/>
            <person name="Schleicher M."/>
            <person name="Weinstock G.M."/>
            <person name="Rosenthal A."/>
            <person name="Cox E.C."/>
            <person name="Chisholm R.L."/>
            <person name="Gibbs R.A."/>
            <person name="Loomis W.F."/>
            <person name="Platzer M."/>
            <person name="Kay R.R."/>
            <person name="Williams J.G."/>
            <person name="Dear P.H."/>
            <person name="Noegel A.A."/>
            <person name="Barrell B.G."/>
            <person name="Kuspa A."/>
        </authorList>
    </citation>
    <scope>NUCLEOTIDE SEQUENCE [LARGE SCALE GENOMIC DNA]</scope>
    <source>
        <strain>AX4</strain>
    </source>
</reference>
<proteinExistence type="evidence at transcript level"/>
<comment type="function">
    <text evidence="3">Required for cell-substrate adhesion, cell sorting, slug migration, and cell differentiation. May function upstream of limB.</text>
</comment>
<comment type="subcellular location">
    <subcellularLocation>
        <location evidence="3">Cytoplasm</location>
        <location evidence="3">Cell cortex</location>
    </subcellularLocation>
    <subcellularLocation>
        <location evidence="3">Cell projection</location>
        <location evidence="3">Filopodium</location>
    </subcellularLocation>
    <subcellularLocation>
        <location evidence="3">Cell junction</location>
        <location evidence="3">Focal adhesion</location>
    </subcellularLocation>
    <subcellularLocation>
        <location evidence="3">Cytoplasm</location>
        <location evidence="3">Cytoskeleton</location>
    </subcellularLocation>
    <text>Expressed at the tips of filopodial structures located at the trailing ends of cells. Found in the focal adhesions at the cell-substrate interface.</text>
</comment>
<comment type="tissue specificity">
    <text evidence="3">Expressed in the upper and lower cup of the fruiting body.</text>
</comment>
<comment type="developmental stage">
    <text evidence="3">Expressed during vegetative growth and all stages of development, with a peak during slug formation.</text>
</comment>
<comment type="disruption phenotype">
    <text evidence="3">Cells are less adhesive to the substrate and remain competent to aggregate, although multicellular development is severely impeded from the mound stage. They are defective in proper cell type proportioning, cell sorting, slug migration and form defective fruiting bodies.</text>
</comment>
<comment type="similarity">
    <text evidence="4">Belongs to the paxillin family.</text>
</comment>
<comment type="sequence caution" evidence="4">
    <conflict type="frameshift">
        <sequence resource="EMBL-CDS" id="CAA05356"/>
    </conflict>
</comment>
<gene>
    <name type="primary">paxB</name>
    <name type="ORF">DDB_G0274109</name>
</gene>
<accession>Q8MML5</accession>
<accession>O15817</accession>
<accession>Q555N0</accession>
<accession>Q8T166</accession>